<evidence type="ECO:0000255" key="1">
    <source>
        <dbReference type="HAMAP-Rule" id="MF_00049"/>
    </source>
</evidence>
<accession>Q2LQK5</accession>
<gene>
    <name evidence="1" type="primary">leuS</name>
    <name type="ordered locus">SYNAS_01790</name>
    <name type="ORF">SYN_02374</name>
</gene>
<comment type="catalytic activity">
    <reaction evidence="1">
        <text>tRNA(Leu) + L-leucine + ATP = L-leucyl-tRNA(Leu) + AMP + diphosphate</text>
        <dbReference type="Rhea" id="RHEA:11688"/>
        <dbReference type="Rhea" id="RHEA-COMP:9613"/>
        <dbReference type="Rhea" id="RHEA-COMP:9622"/>
        <dbReference type="ChEBI" id="CHEBI:30616"/>
        <dbReference type="ChEBI" id="CHEBI:33019"/>
        <dbReference type="ChEBI" id="CHEBI:57427"/>
        <dbReference type="ChEBI" id="CHEBI:78442"/>
        <dbReference type="ChEBI" id="CHEBI:78494"/>
        <dbReference type="ChEBI" id="CHEBI:456215"/>
        <dbReference type="EC" id="6.1.1.4"/>
    </reaction>
</comment>
<comment type="subcellular location">
    <subcellularLocation>
        <location evidence="1">Cytoplasm</location>
    </subcellularLocation>
</comment>
<comment type="similarity">
    <text evidence="1">Belongs to the class-I aminoacyl-tRNA synthetase family.</text>
</comment>
<dbReference type="EC" id="6.1.1.4" evidence="1"/>
<dbReference type="EMBL" id="CP000252">
    <property type="protein sequence ID" value="ABC76058.1"/>
    <property type="molecule type" value="Genomic_DNA"/>
</dbReference>
<dbReference type="RefSeq" id="WP_011416093.1">
    <property type="nucleotide sequence ID" value="NC_007759.1"/>
</dbReference>
<dbReference type="SMR" id="Q2LQK5"/>
<dbReference type="FunCoup" id="Q2LQK5">
    <property type="interactions" value="511"/>
</dbReference>
<dbReference type="STRING" id="56780.SYN_02374"/>
<dbReference type="KEGG" id="sat:SYN_02374"/>
<dbReference type="eggNOG" id="COG0495">
    <property type="taxonomic scope" value="Bacteria"/>
</dbReference>
<dbReference type="HOGENOM" id="CLU_004427_0_0_7"/>
<dbReference type="InParanoid" id="Q2LQK5"/>
<dbReference type="OrthoDB" id="9810365at2"/>
<dbReference type="Proteomes" id="UP000001933">
    <property type="component" value="Chromosome"/>
</dbReference>
<dbReference type="GO" id="GO:0005829">
    <property type="term" value="C:cytosol"/>
    <property type="evidence" value="ECO:0007669"/>
    <property type="project" value="TreeGrafter"/>
</dbReference>
<dbReference type="GO" id="GO:0002161">
    <property type="term" value="F:aminoacyl-tRNA deacylase activity"/>
    <property type="evidence" value="ECO:0007669"/>
    <property type="project" value="InterPro"/>
</dbReference>
<dbReference type="GO" id="GO:0005524">
    <property type="term" value="F:ATP binding"/>
    <property type="evidence" value="ECO:0007669"/>
    <property type="project" value="UniProtKB-UniRule"/>
</dbReference>
<dbReference type="GO" id="GO:0004823">
    <property type="term" value="F:leucine-tRNA ligase activity"/>
    <property type="evidence" value="ECO:0007669"/>
    <property type="project" value="UniProtKB-UniRule"/>
</dbReference>
<dbReference type="GO" id="GO:0006429">
    <property type="term" value="P:leucyl-tRNA aminoacylation"/>
    <property type="evidence" value="ECO:0007669"/>
    <property type="project" value="UniProtKB-UniRule"/>
</dbReference>
<dbReference type="CDD" id="cd07958">
    <property type="entry name" value="Anticodon_Ia_Leu_BEm"/>
    <property type="match status" value="1"/>
</dbReference>
<dbReference type="CDD" id="cd00812">
    <property type="entry name" value="LeuRS_core"/>
    <property type="match status" value="1"/>
</dbReference>
<dbReference type="FunFam" id="1.10.730.10:FF:000002">
    <property type="entry name" value="Leucine--tRNA ligase"/>
    <property type="match status" value="1"/>
</dbReference>
<dbReference type="FunFam" id="3.40.50.620:FF:000003">
    <property type="entry name" value="Leucine--tRNA ligase"/>
    <property type="match status" value="1"/>
</dbReference>
<dbReference type="FunFam" id="3.40.50.620:FF:000056">
    <property type="entry name" value="Leucine--tRNA ligase"/>
    <property type="match status" value="1"/>
</dbReference>
<dbReference type="Gene3D" id="3.40.50.620">
    <property type="entry name" value="HUPs"/>
    <property type="match status" value="2"/>
</dbReference>
<dbReference type="Gene3D" id="1.10.730.10">
    <property type="entry name" value="Isoleucyl-tRNA Synthetase, Domain 1"/>
    <property type="match status" value="2"/>
</dbReference>
<dbReference type="HAMAP" id="MF_00049_B">
    <property type="entry name" value="Leu_tRNA_synth_B"/>
    <property type="match status" value="1"/>
</dbReference>
<dbReference type="InterPro" id="IPR001412">
    <property type="entry name" value="aa-tRNA-synth_I_CS"/>
</dbReference>
<dbReference type="InterPro" id="IPR002300">
    <property type="entry name" value="aa-tRNA-synth_Ia"/>
</dbReference>
<dbReference type="InterPro" id="IPR002302">
    <property type="entry name" value="Leu-tRNA-ligase"/>
</dbReference>
<dbReference type="InterPro" id="IPR025709">
    <property type="entry name" value="Leu_tRNA-synth_edit"/>
</dbReference>
<dbReference type="InterPro" id="IPR013155">
    <property type="entry name" value="M/V/L/I-tRNA-synth_anticd-bd"/>
</dbReference>
<dbReference type="InterPro" id="IPR015413">
    <property type="entry name" value="Methionyl/Leucyl_tRNA_Synth"/>
</dbReference>
<dbReference type="InterPro" id="IPR014729">
    <property type="entry name" value="Rossmann-like_a/b/a_fold"/>
</dbReference>
<dbReference type="InterPro" id="IPR009080">
    <property type="entry name" value="tRNAsynth_Ia_anticodon-bd"/>
</dbReference>
<dbReference type="InterPro" id="IPR009008">
    <property type="entry name" value="Val/Leu/Ile-tRNA-synth_edit"/>
</dbReference>
<dbReference type="NCBIfam" id="TIGR00396">
    <property type="entry name" value="leuS_bact"/>
    <property type="match status" value="1"/>
</dbReference>
<dbReference type="PANTHER" id="PTHR43740:SF2">
    <property type="entry name" value="LEUCINE--TRNA LIGASE, MITOCHONDRIAL"/>
    <property type="match status" value="1"/>
</dbReference>
<dbReference type="PANTHER" id="PTHR43740">
    <property type="entry name" value="LEUCYL-TRNA SYNTHETASE"/>
    <property type="match status" value="1"/>
</dbReference>
<dbReference type="Pfam" id="PF08264">
    <property type="entry name" value="Anticodon_1"/>
    <property type="match status" value="1"/>
</dbReference>
<dbReference type="Pfam" id="PF00133">
    <property type="entry name" value="tRNA-synt_1"/>
    <property type="match status" value="2"/>
</dbReference>
<dbReference type="Pfam" id="PF13603">
    <property type="entry name" value="tRNA-synt_1_2"/>
    <property type="match status" value="1"/>
</dbReference>
<dbReference type="Pfam" id="PF09334">
    <property type="entry name" value="tRNA-synt_1g"/>
    <property type="match status" value="1"/>
</dbReference>
<dbReference type="PRINTS" id="PR00985">
    <property type="entry name" value="TRNASYNTHLEU"/>
</dbReference>
<dbReference type="SUPFAM" id="SSF47323">
    <property type="entry name" value="Anticodon-binding domain of a subclass of class I aminoacyl-tRNA synthetases"/>
    <property type="match status" value="1"/>
</dbReference>
<dbReference type="SUPFAM" id="SSF52374">
    <property type="entry name" value="Nucleotidylyl transferase"/>
    <property type="match status" value="1"/>
</dbReference>
<dbReference type="SUPFAM" id="SSF50677">
    <property type="entry name" value="ValRS/IleRS/LeuRS editing domain"/>
    <property type="match status" value="1"/>
</dbReference>
<dbReference type="PROSITE" id="PS00178">
    <property type="entry name" value="AA_TRNA_LIGASE_I"/>
    <property type="match status" value="1"/>
</dbReference>
<reference key="1">
    <citation type="journal article" date="2007" name="Proc. Natl. Acad. Sci. U.S.A.">
        <title>The genome of Syntrophus aciditrophicus: life at the thermodynamic limit of microbial growth.</title>
        <authorList>
            <person name="McInerney M.J."/>
            <person name="Rohlin L."/>
            <person name="Mouttaki H."/>
            <person name="Kim U."/>
            <person name="Krupp R.S."/>
            <person name="Rios-Hernandez L."/>
            <person name="Sieber J."/>
            <person name="Struchtemeyer C.G."/>
            <person name="Bhattacharyya A."/>
            <person name="Campbell J.W."/>
            <person name="Gunsalus R.P."/>
        </authorList>
    </citation>
    <scope>NUCLEOTIDE SEQUENCE [LARGE SCALE GENOMIC DNA]</scope>
    <source>
        <strain>SB</strain>
    </source>
</reference>
<name>SYL_SYNAS</name>
<keyword id="KW-0030">Aminoacyl-tRNA synthetase</keyword>
<keyword id="KW-0067">ATP-binding</keyword>
<keyword id="KW-0963">Cytoplasm</keyword>
<keyword id="KW-0436">Ligase</keyword>
<keyword id="KW-0547">Nucleotide-binding</keyword>
<keyword id="KW-0648">Protein biosynthesis</keyword>
<keyword id="KW-1185">Reference proteome</keyword>
<proteinExistence type="inferred from homology"/>
<organism>
    <name type="scientific">Syntrophus aciditrophicus (strain SB)</name>
    <dbReference type="NCBI Taxonomy" id="56780"/>
    <lineage>
        <taxon>Bacteria</taxon>
        <taxon>Pseudomonadati</taxon>
        <taxon>Thermodesulfobacteriota</taxon>
        <taxon>Syntrophia</taxon>
        <taxon>Syntrophales</taxon>
        <taxon>Syntrophaceae</taxon>
        <taxon>Syntrophus</taxon>
    </lineage>
</organism>
<sequence>MNRKYVPQEIEEKWQRYWEEKNTFKVTEDPSKKKYYLLEMFPYPSGKIHIGHVRNYTIGDVVARYKRMEGYNVLHPMGWDSFGMPAENAAIERGIHPSLWTNENITHMRKQLKRMGFSYDWDREVSTCEPVYYRWEQLFFLWMYEKGLAYKKTSSVNWCPRCQTVLANEQVEAGLCWRCGSEVVEKILDQWFFRITAYIDELLAGCDRLTGWPERVLTMQRNWIGKSYGCEVSFPMADGNGDIKVFTTRQDTLFGATFMLIAAEHPLVMELIKGKPVEKDARTFAEEVKKQDKLMRTSDYYEKQGLFLDCYCLNPLTGWEMPIFATNFVLADYGTGCVMAVPTHDQRDFEFAEKFGLRKVVVISPPDKTLDPETMTEAYVEEGILVNSGPFNGMENLKALDAIADHLIALGRGKRTIQYRLRDWGISRQRYWGAPIPMIMCPKCGTVPVPEAELPVVLPRDVDFSGEGGSPLAKHPEFLNTTCPSCGGPAKRESDTMDTFVESSWYFERYCCPHFAEKPGLNRQQVDYWMPVDQYIGGIEHAILHLLYARFYTRMLRDFGLVGVDEPFTNLLTQGMVCKETTRCPDHGYLYPEEVREGRCIHCLAEVIVGKTEKMSKSLKNVVDPDYLVRQYGADTARMFCLFAAPPEKDLEWSDQGVEGSFRFIGRTWRIVVDYLDDLQGIAPFAGDGELEGELKSLRRKTHQTIRKVRDDMGERFHFNTAISAIMELVNTLYGLPRPPREDRTALAVIRETIEAIILLLAPIVPHLTEELWQMLGHQGTCLADTPLPVYDPTVAAEDEMTIVIQVNGKVRSRVIVAADEAEDKIKALAMGDEKVSRFLEGKSVIKQVYVPKKLVNIVVKG</sequence>
<protein>
    <recommendedName>
        <fullName evidence="1">Leucine--tRNA ligase</fullName>
        <ecNumber evidence="1">6.1.1.4</ecNumber>
    </recommendedName>
    <alternativeName>
        <fullName evidence="1">Leucyl-tRNA synthetase</fullName>
        <shortName evidence="1">LeuRS</shortName>
    </alternativeName>
</protein>
<feature type="chain" id="PRO_1000009453" description="Leucine--tRNA ligase">
    <location>
        <begin position="1"/>
        <end position="862"/>
    </location>
</feature>
<feature type="short sequence motif" description="'HIGH' region">
    <location>
        <begin position="42"/>
        <end position="52"/>
    </location>
</feature>
<feature type="short sequence motif" description="'KMSKS' region">
    <location>
        <begin position="614"/>
        <end position="618"/>
    </location>
</feature>
<feature type="binding site" evidence="1">
    <location>
        <position position="617"/>
    </location>
    <ligand>
        <name>ATP</name>
        <dbReference type="ChEBI" id="CHEBI:30616"/>
    </ligand>
</feature>